<evidence type="ECO:0000255" key="1">
    <source>
        <dbReference type="HAMAP-Rule" id="MF_00378"/>
    </source>
</evidence>
<feature type="chain" id="PRO_1000200662" description="Exodeoxyribonuclease 7 large subunit">
    <location>
        <begin position="1"/>
        <end position="511"/>
    </location>
</feature>
<comment type="function">
    <text evidence="1">Bidirectionally degrades single-stranded DNA into large acid-insoluble oligonucleotides, which are then degraded further into small acid-soluble oligonucleotides.</text>
</comment>
<comment type="catalytic activity">
    <reaction evidence="1">
        <text>Exonucleolytic cleavage in either 5'- to 3'- or 3'- to 5'-direction to yield nucleoside 5'-phosphates.</text>
        <dbReference type="EC" id="3.1.11.6"/>
    </reaction>
</comment>
<comment type="subunit">
    <text evidence="1">Heterooligomer composed of large and small subunits.</text>
</comment>
<comment type="subcellular location">
    <subcellularLocation>
        <location evidence="1">Cytoplasm</location>
    </subcellularLocation>
</comment>
<comment type="similarity">
    <text evidence="1">Belongs to the XseA family.</text>
</comment>
<reference key="1">
    <citation type="submission" date="2009-03" db="EMBL/GenBank/DDBJ databases">
        <title>Brucella melitensis ATCC 23457 whole genome shotgun sequencing project.</title>
        <authorList>
            <person name="Setubal J.C."/>
            <person name="Boyle S."/>
            <person name="Crasta O.R."/>
            <person name="Gillespie J.J."/>
            <person name="Kenyon R.W."/>
            <person name="Lu J."/>
            <person name="Mane S."/>
            <person name="Nagrani S."/>
            <person name="Shallom J.M."/>
            <person name="Shallom S."/>
            <person name="Shukla M."/>
            <person name="Snyder E.E."/>
            <person name="Sobral B.W."/>
            <person name="Wattam A.R."/>
            <person name="Will R."/>
            <person name="Williams K."/>
            <person name="Yoo H."/>
            <person name="Munk C."/>
            <person name="Tapia R."/>
            <person name="Han C."/>
            <person name="Detter J.C."/>
            <person name="Bruce D."/>
            <person name="Brettin T.S."/>
        </authorList>
    </citation>
    <scope>NUCLEOTIDE SEQUENCE [LARGE SCALE GENOMIC DNA]</scope>
    <source>
        <strain>ATCC 23457</strain>
    </source>
</reference>
<gene>
    <name evidence="1" type="primary">xseA</name>
    <name type="ordered locus">BMEA_B0742</name>
</gene>
<sequence length="511" mass="56347">MASDSSFPGASSNVAEYSVSEISGALKRTVEDTFGHVRVRGEISGYRGPHSSGHAYFALKDDRARLEAVIWRGSMSRLRFRPEEGMEVIATGKLTTYPGSSKYQIVIEQMEPAGAGALMALLEERKQRLAAEGLFDPALKQLLPFMPRVIGVVTSPTGAVIRDIIHRISDRYPLRVIVWPVRVQGDTCGPEVATAVNGFNTLPDDGPIPRPDVLIVARGGGSLEDLWGFNDEIVVRAVAASHIPVISAVGHETDWTLIDLAADMRAPTPTGAAEMAVPVKADLQASLASQSARLSSAMSRFFDQKRQAHRAAARAMPSADQLLALPRRRFDEAASRLTRALFVNTQKKRVHFDGHARQLSPRLLQRRLVELERGVTMLGQRLPRALEAFLRERRTAFTHRANRLSPEPILRRTRLTGSTLEQLDRRRDQAVRLLIERVKRRSQELDRLMRTLSYESVLERGFAVVFDAQGKPVKQAAAVSPGDALSIRFRDGDVGVVARAGLTIPDPTKGQ</sequence>
<accession>C0RLR7</accession>
<proteinExistence type="inferred from homology"/>
<protein>
    <recommendedName>
        <fullName evidence="1">Exodeoxyribonuclease 7 large subunit</fullName>
        <ecNumber evidence="1">3.1.11.6</ecNumber>
    </recommendedName>
    <alternativeName>
        <fullName evidence="1">Exodeoxyribonuclease VII large subunit</fullName>
        <shortName evidence="1">Exonuclease VII large subunit</shortName>
    </alternativeName>
</protein>
<keyword id="KW-0963">Cytoplasm</keyword>
<keyword id="KW-0269">Exonuclease</keyword>
<keyword id="KW-0378">Hydrolase</keyword>
<keyword id="KW-0540">Nuclease</keyword>
<organism>
    <name type="scientific">Brucella melitensis biotype 2 (strain ATCC 23457)</name>
    <dbReference type="NCBI Taxonomy" id="546272"/>
    <lineage>
        <taxon>Bacteria</taxon>
        <taxon>Pseudomonadati</taxon>
        <taxon>Pseudomonadota</taxon>
        <taxon>Alphaproteobacteria</taxon>
        <taxon>Hyphomicrobiales</taxon>
        <taxon>Brucellaceae</taxon>
        <taxon>Brucella/Ochrobactrum group</taxon>
        <taxon>Brucella</taxon>
    </lineage>
</organism>
<name>EX7L_BRUMB</name>
<dbReference type="EC" id="3.1.11.6" evidence="1"/>
<dbReference type="EMBL" id="CP001489">
    <property type="protein sequence ID" value="ACO02550.1"/>
    <property type="molecule type" value="Genomic_DNA"/>
</dbReference>
<dbReference type="SMR" id="C0RLR7"/>
<dbReference type="KEGG" id="bmi:BMEA_B0742"/>
<dbReference type="HOGENOM" id="CLU_023625_3_1_5"/>
<dbReference type="PRO" id="PR:C0RLR7"/>
<dbReference type="Proteomes" id="UP000001748">
    <property type="component" value="Chromosome II"/>
</dbReference>
<dbReference type="GO" id="GO:0005737">
    <property type="term" value="C:cytoplasm"/>
    <property type="evidence" value="ECO:0007669"/>
    <property type="project" value="UniProtKB-SubCell"/>
</dbReference>
<dbReference type="GO" id="GO:0009318">
    <property type="term" value="C:exodeoxyribonuclease VII complex"/>
    <property type="evidence" value="ECO:0007669"/>
    <property type="project" value="InterPro"/>
</dbReference>
<dbReference type="GO" id="GO:0008855">
    <property type="term" value="F:exodeoxyribonuclease VII activity"/>
    <property type="evidence" value="ECO:0007669"/>
    <property type="project" value="UniProtKB-UniRule"/>
</dbReference>
<dbReference type="GO" id="GO:0003676">
    <property type="term" value="F:nucleic acid binding"/>
    <property type="evidence" value="ECO:0007669"/>
    <property type="project" value="InterPro"/>
</dbReference>
<dbReference type="GO" id="GO:0006308">
    <property type="term" value="P:DNA catabolic process"/>
    <property type="evidence" value="ECO:0007669"/>
    <property type="project" value="UniProtKB-UniRule"/>
</dbReference>
<dbReference type="CDD" id="cd04489">
    <property type="entry name" value="ExoVII_LU_OBF"/>
    <property type="match status" value="1"/>
</dbReference>
<dbReference type="HAMAP" id="MF_00378">
    <property type="entry name" value="Exonuc_7_L"/>
    <property type="match status" value="1"/>
</dbReference>
<dbReference type="InterPro" id="IPR003753">
    <property type="entry name" value="Exonuc_VII_L"/>
</dbReference>
<dbReference type="InterPro" id="IPR020579">
    <property type="entry name" value="Exonuc_VII_lsu_C"/>
</dbReference>
<dbReference type="InterPro" id="IPR025824">
    <property type="entry name" value="OB-fold_nuc-bd_dom"/>
</dbReference>
<dbReference type="NCBIfam" id="TIGR00237">
    <property type="entry name" value="xseA"/>
    <property type="match status" value="1"/>
</dbReference>
<dbReference type="PANTHER" id="PTHR30008">
    <property type="entry name" value="EXODEOXYRIBONUCLEASE 7 LARGE SUBUNIT"/>
    <property type="match status" value="1"/>
</dbReference>
<dbReference type="PANTHER" id="PTHR30008:SF0">
    <property type="entry name" value="EXODEOXYRIBONUCLEASE 7 LARGE SUBUNIT"/>
    <property type="match status" value="1"/>
</dbReference>
<dbReference type="Pfam" id="PF02601">
    <property type="entry name" value="Exonuc_VII_L"/>
    <property type="match status" value="2"/>
</dbReference>
<dbReference type="Pfam" id="PF13742">
    <property type="entry name" value="tRNA_anti_2"/>
    <property type="match status" value="1"/>
</dbReference>